<sequence>MHLQFLGTGAGTPSRERNVTSIALDLHGVRNATWLFDCGEGTQHQILRTPIKPGRIEKIFITHLHGDHLFGLPGLLTSRSMNGCVEPMTLYGPAGIKTFVETSLSLSGSWLTFPLEIIEISAGEVFQDAHFRVTAYPLTHPVECYGYRIDELDKPGALDAQKLAAHGVPAGPHFYQLKQGRSVTLDDGRVINGWDYVGSKIKGRSLAIFGDTSPTAAASELAAGVDIMVHEATLEVAMEEKANGRGHSSTVQAARVAQQSGAKKLIITHLSSRYLHHDCERLLAECRAVFPHTEMAHDFALFPC</sequence>
<dbReference type="EC" id="3.1.-.-" evidence="1"/>
<dbReference type="EMBL" id="CU468135">
    <property type="protein sequence ID" value="CAO98371.1"/>
    <property type="molecule type" value="Genomic_DNA"/>
</dbReference>
<dbReference type="RefSeq" id="WP_012442995.1">
    <property type="nucleotide sequence ID" value="NC_010694.1"/>
</dbReference>
<dbReference type="SMR" id="B2VHF1"/>
<dbReference type="STRING" id="465817.ETA_33250"/>
<dbReference type="KEGG" id="eta:ETA_33250"/>
<dbReference type="eggNOG" id="COG1234">
    <property type="taxonomic scope" value="Bacteria"/>
</dbReference>
<dbReference type="HOGENOM" id="CLU_031317_2_0_6"/>
<dbReference type="OrthoDB" id="9803916at2"/>
<dbReference type="Proteomes" id="UP000001726">
    <property type="component" value="Chromosome"/>
</dbReference>
<dbReference type="GO" id="GO:0042781">
    <property type="term" value="F:3'-tRNA processing endoribonuclease activity"/>
    <property type="evidence" value="ECO:0007669"/>
    <property type="project" value="TreeGrafter"/>
</dbReference>
<dbReference type="GO" id="GO:0004527">
    <property type="term" value="F:exonuclease activity"/>
    <property type="evidence" value="ECO:0007669"/>
    <property type="project" value="UniProtKB-UniRule"/>
</dbReference>
<dbReference type="GO" id="GO:0008270">
    <property type="term" value="F:zinc ion binding"/>
    <property type="evidence" value="ECO:0007669"/>
    <property type="project" value="UniProtKB-UniRule"/>
</dbReference>
<dbReference type="CDD" id="cd07717">
    <property type="entry name" value="RNaseZ_ZiPD-like_MBL-fold"/>
    <property type="match status" value="1"/>
</dbReference>
<dbReference type="FunFam" id="3.60.15.10:FF:000002">
    <property type="entry name" value="Ribonuclease Z"/>
    <property type="match status" value="1"/>
</dbReference>
<dbReference type="Gene3D" id="3.60.15.10">
    <property type="entry name" value="Ribonuclease Z/Hydroxyacylglutathione hydrolase-like"/>
    <property type="match status" value="1"/>
</dbReference>
<dbReference type="HAMAP" id="MF_01818">
    <property type="entry name" value="RNase_Z_BN"/>
    <property type="match status" value="1"/>
</dbReference>
<dbReference type="InterPro" id="IPR001279">
    <property type="entry name" value="Metallo-B-lactamas"/>
</dbReference>
<dbReference type="InterPro" id="IPR036866">
    <property type="entry name" value="RibonucZ/Hydroxyglut_hydro"/>
</dbReference>
<dbReference type="InterPro" id="IPR013471">
    <property type="entry name" value="RNase_Z/BN"/>
</dbReference>
<dbReference type="NCBIfam" id="NF000800">
    <property type="entry name" value="PRK00055.1-1"/>
    <property type="match status" value="1"/>
</dbReference>
<dbReference type="NCBIfam" id="NF000801">
    <property type="entry name" value="PRK00055.1-3"/>
    <property type="match status" value="1"/>
</dbReference>
<dbReference type="NCBIfam" id="TIGR02651">
    <property type="entry name" value="RNase_Z"/>
    <property type="match status" value="1"/>
</dbReference>
<dbReference type="PANTHER" id="PTHR46018">
    <property type="entry name" value="ZINC PHOSPHODIESTERASE ELAC PROTEIN 1"/>
    <property type="match status" value="1"/>
</dbReference>
<dbReference type="PANTHER" id="PTHR46018:SF2">
    <property type="entry name" value="ZINC PHOSPHODIESTERASE ELAC PROTEIN 1"/>
    <property type="match status" value="1"/>
</dbReference>
<dbReference type="Pfam" id="PF12706">
    <property type="entry name" value="Lactamase_B_2"/>
    <property type="match status" value="1"/>
</dbReference>
<dbReference type="SUPFAM" id="SSF56281">
    <property type="entry name" value="Metallo-hydrolase/oxidoreductase"/>
    <property type="match status" value="1"/>
</dbReference>
<feature type="chain" id="PRO_1000187960" description="Ribonuclease BN">
    <location>
        <begin position="1"/>
        <end position="304"/>
    </location>
</feature>
<feature type="active site" description="Proton acceptor" evidence="1">
    <location>
        <position position="67"/>
    </location>
</feature>
<feature type="binding site" evidence="1">
    <location>
        <position position="63"/>
    </location>
    <ligand>
        <name>Zn(2+)</name>
        <dbReference type="ChEBI" id="CHEBI:29105"/>
        <label>1</label>
        <note>catalytic</note>
    </ligand>
</feature>
<feature type="binding site" evidence="1">
    <location>
        <position position="65"/>
    </location>
    <ligand>
        <name>Zn(2+)</name>
        <dbReference type="ChEBI" id="CHEBI:29105"/>
        <label>1</label>
        <note>catalytic</note>
    </ligand>
</feature>
<feature type="binding site" evidence="1">
    <location>
        <position position="67"/>
    </location>
    <ligand>
        <name>Zn(2+)</name>
        <dbReference type="ChEBI" id="CHEBI:29105"/>
        <label>2</label>
        <note>catalytic</note>
    </ligand>
</feature>
<feature type="binding site" evidence="1">
    <location>
        <position position="68"/>
    </location>
    <ligand>
        <name>Zn(2+)</name>
        <dbReference type="ChEBI" id="CHEBI:29105"/>
        <label>2</label>
        <note>catalytic</note>
    </ligand>
</feature>
<feature type="binding site" evidence="1">
    <location>
        <position position="140"/>
    </location>
    <ligand>
        <name>Zn(2+)</name>
        <dbReference type="ChEBI" id="CHEBI:29105"/>
        <label>1</label>
        <note>catalytic</note>
    </ligand>
</feature>
<feature type="binding site" evidence="1">
    <location>
        <position position="211"/>
    </location>
    <ligand>
        <name>Zn(2+)</name>
        <dbReference type="ChEBI" id="CHEBI:29105"/>
        <label>1</label>
        <note>catalytic</note>
    </ligand>
</feature>
<feature type="binding site" evidence="1">
    <location>
        <position position="211"/>
    </location>
    <ligand>
        <name>Zn(2+)</name>
        <dbReference type="ChEBI" id="CHEBI:29105"/>
        <label>2</label>
        <note>catalytic</note>
    </ligand>
</feature>
<feature type="binding site" evidence="1">
    <location>
        <position position="269"/>
    </location>
    <ligand>
        <name>Zn(2+)</name>
        <dbReference type="ChEBI" id="CHEBI:29105"/>
        <label>2</label>
        <note>catalytic</note>
    </ligand>
</feature>
<proteinExistence type="inferred from homology"/>
<organism>
    <name type="scientific">Erwinia tasmaniensis (strain DSM 17950 / CFBP 7177 / CIP 109463 / NCPPB 4357 / Et1/99)</name>
    <dbReference type="NCBI Taxonomy" id="465817"/>
    <lineage>
        <taxon>Bacteria</taxon>
        <taxon>Pseudomonadati</taxon>
        <taxon>Pseudomonadota</taxon>
        <taxon>Gammaproteobacteria</taxon>
        <taxon>Enterobacterales</taxon>
        <taxon>Erwiniaceae</taxon>
        <taxon>Erwinia</taxon>
    </lineage>
</organism>
<reference key="1">
    <citation type="journal article" date="2008" name="Environ. Microbiol.">
        <title>The genome of Erwinia tasmaniensis strain Et1/99, a non-pathogenic bacterium in the genus Erwinia.</title>
        <authorList>
            <person name="Kube M."/>
            <person name="Migdoll A.M."/>
            <person name="Mueller I."/>
            <person name="Kuhl H."/>
            <person name="Beck A."/>
            <person name="Reinhardt R."/>
            <person name="Geider K."/>
        </authorList>
    </citation>
    <scope>NUCLEOTIDE SEQUENCE [LARGE SCALE GENOMIC DNA]</scope>
    <source>
        <strain>DSM 17950 / CFBP 7177 / CIP 109463 / NCPPB 4357 / Et1/99</strain>
    </source>
</reference>
<evidence type="ECO:0000255" key="1">
    <source>
        <dbReference type="HAMAP-Rule" id="MF_01818"/>
    </source>
</evidence>
<accession>B2VHF1</accession>
<gene>
    <name evidence="1" type="primary">rbn</name>
    <name type="synonym">rnz</name>
    <name type="ordered locus">ETA_33250</name>
</gene>
<protein>
    <recommendedName>
        <fullName evidence="1">Ribonuclease BN</fullName>
        <shortName evidence="1">RNase BN</shortName>
        <ecNumber evidence="1">3.1.-.-</ecNumber>
    </recommendedName>
    <alternativeName>
        <fullName evidence="1">Ribonuclease Z homolog</fullName>
        <shortName evidence="1">RNase Z homolog</shortName>
    </alternativeName>
</protein>
<name>RBN_ERWT9</name>
<keyword id="KW-0255">Endonuclease</keyword>
<keyword id="KW-0269">Exonuclease</keyword>
<keyword id="KW-0378">Hydrolase</keyword>
<keyword id="KW-0479">Metal-binding</keyword>
<keyword id="KW-0540">Nuclease</keyword>
<keyword id="KW-1185">Reference proteome</keyword>
<keyword id="KW-0819">tRNA processing</keyword>
<keyword id="KW-0862">Zinc</keyword>
<comment type="function">
    <text evidence="1">Zinc phosphodiesterase, which has both exoribonuclease and endoribonuclease activities.</text>
</comment>
<comment type="cofactor">
    <cofactor evidence="1">
        <name>Zn(2+)</name>
        <dbReference type="ChEBI" id="CHEBI:29105"/>
    </cofactor>
    <text evidence="1">Binds 2 Zn(2+) ions.</text>
</comment>
<comment type="subunit">
    <text evidence="1">Homodimer.</text>
</comment>
<comment type="similarity">
    <text evidence="1">Belongs to the RNase Z family. RNase BN subfamily.</text>
</comment>